<feature type="chain" id="PRO_0000340858" description="Tetraacyldisaccharide 4'-kinase">
    <location>
        <begin position="1"/>
        <end position="339"/>
    </location>
</feature>
<feature type="binding site" evidence="1">
    <location>
        <begin position="58"/>
        <end position="65"/>
    </location>
    <ligand>
        <name>ATP</name>
        <dbReference type="ChEBI" id="CHEBI:30616"/>
    </ligand>
</feature>
<evidence type="ECO:0000255" key="1">
    <source>
        <dbReference type="HAMAP-Rule" id="MF_00409"/>
    </source>
</evidence>
<reference key="1">
    <citation type="submission" date="2007-07" db="EMBL/GenBank/DDBJ databases">
        <title>Complete sequence of chromosome of Shewanella baltica OS185.</title>
        <authorList>
            <consortium name="US DOE Joint Genome Institute"/>
            <person name="Copeland A."/>
            <person name="Lucas S."/>
            <person name="Lapidus A."/>
            <person name="Barry K."/>
            <person name="Glavina del Rio T."/>
            <person name="Dalin E."/>
            <person name="Tice H."/>
            <person name="Pitluck S."/>
            <person name="Sims D."/>
            <person name="Brettin T."/>
            <person name="Bruce D."/>
            <person name="Detter J.C."/>
            <person name="Han C."/>
            <person name="Schmutz J."/>
            <person name="Larimer F."/>
            <person name="Land M."/>
            <person name="Hauser L."/>
            <person name="Kyrpides N."/>
            <person name="Mikhailova N."/>
            <person name="Brettar I."/>
            <person name="Rodrigues J."/>
            <person name="Konstantinidis K."/>
            <person name="Tiedje J."/>
            <person name="Richardson P."/>
        </authorList>
    </citation>
    <scope>NUCLEOTIDE SEQUENCE [LARGE SCALE GENOMIC DNA]</scope>
    <source>
        <strain>OS185</strain>
    </source>
</reference>
<protein>
    <recommendedName>
        <fullName evidence="1">Tetraacyldisaccharide 4'-kinase</fullName>
        <ecNumber evidence="1">2.7.1.130</ecNumber>
    </recommendedName>
    <alternativeName>
        <fullName evidence="1">Lipid A 4'-kinase</fullName>
    </alternativeName>
</protein>
<organism>
    <name type="scientific">Shewanella baltica (strain OS185)</name>
    <dbReference type="NCBI Taxonomy" id="402882"/>
    <lineage>
        <taxon>Bacteria</taxon>
        <taxon>Pseudomonadati</taxon>
        <taxon>Pseudomonadota</taxon>
        <taxon>Gammaproteobacteria</taxon>
        <taxon>Alteromonadales</taxon>
        <taxon>Shewanellaceae</taxon>
        <taxon>Shewanella</taxon>
    </lineage>
</organism>
<dbReference type="EC" id="2.7.1.130" evidence="1"/>
<dbReference type="EMBL" id="CP000753">
    <property type="protein sequence ID" value="ABS07814.1"/>
    <property type="molecule type" value="Genomic_DNA"/>
</dbReference>
<dbReference type="RefSeq" id="WP_012088850.1">
    <property type="nucleotide sequence ID" value="NC_009665.1"/>
</dbReference>
<dbReference type="SMR" id="A6WLX5"/>
<dbReference type="KEGG" id="sbm:Shew185_1669"/>
<dbReference type="HOGENOM" id="CLU_038816_2_0_6"/>
<dbReference type="UniPathway" id="UPA00359">
    <property type="reaction ID" value="UER00482"/>
</dbReference>
<dbReference type="GO" id="GO:0005886">
    <property type="term" value="C:plasma membrane"/>
    <property type="evidence" value="ECO:0007669"/>
    <property type="project" value="TreeGrafter"/>
</dbReference>
<dbReference type="GO" id="GO:0005524">
    <property type="term" value="F:ATP binding"/>
    <property type="evidence" value="ECO:0007669"/>
    <property type="project" value="UniProtKB-UniRule"/>
</dbReference>
<dbReference type="GO" id="GO:0009029">
    <property type="term" value="F:tetraacyldisaccharide 4'-kinase activity"/>
    <property type="evidence" value="ECO:0007669"/>
    <property type="project" value="UniProtKB-UniRule"/>
</dbReference>
<dbReference type="GO" id="GO:0009245">
    <property type="term" value="P:lipid A biosynthetic process"/>
    <property type="evidence" value="ECO:0007669"/>
    <property type="project" value="UniProtKB-UniRule"/>
</dbReference>
<dbReference type="GO" id="GO:0009244">
    <property type="term" value="P:lipopolysaccharide core region biosynthetic process"/>
    <property type="evidence" value="ECO:0007669"/>
    <property type="project" value="TreeGrafter"/>
</dbReference>
<dbReference type="HAMAP" id="MF_00409">
    <property type="entry name" value="LpxK"/>
    <property type="match status" value="1"/>
</dbReference>
<dbReference type="InterPro" id="IPR003758">
    <property type="entry name" value="LpxK"/>
</dbReference>
<dbReference type="InterPro" id="IPR027417">
    <property type="entry name" value="P-loop_NTPase"/>
</dbReference>
<dbReference type="NCBIfam" id="TIGR00682">
    <property type="entry name" value="lpxK"/>
    <property type="match status" value="1"/>
</dbReference>
<dbReference type="PANTHER" id="PTHR42724">
    <property type="entry name" value="TETRAACYLDISACCHARIDE 4'-KINASE"/>
    <property type="match status" value="1"/>
</dbReference>
<dbReference type="PANTHER" id="PTHR42724:SF1">
    <property type="entry name" value="TETRAACYLDISACCHARIDE 4'-KINASE, MITOCHONDRIAL-RELATED"/>
    <property type="match status" value="1"/>
</dbReference>
<dbReference type="Pfam" id="PF02606">
    <property type="entry name" value="LpxK"/>
    <property type="match status" value="1"/>
</dbReference>
<dbReference type="SUPFAM" id="SSF52540">
    <property type="entry name" value="P-loop containing nucleoside triphosphate hydrolases"/>
    <property type="match status" value="1"/>
</dbReference>
<gene>
    <name evidence="1" type="primary">lpxK</name>
    <name type="ordered locus">Shew185_1669</name>
</gene>
<accession>A6WLX5</accession>
<keyword id="KW-0067">ATP-binding</keyword>
<keyword id="KW-0418">Kinase</keyword>
<keyword id="KW-0441">Lipid A biosynthesis</keyword>
<keyword id="KW-0444">Lipid biosynthesis</keyword>
<keyword id="KW-0443">Lipid metabolism</keyword>
<keyword id="KW-0547">Nucleotide-binding</keyword>
<keyword id="KW-0808">Transferase</keyword>
<name>LPXK_SHEB8</name>
<comment type="function">
    <text evidence="1">Transfers the gamma-phosphate of ATP to the 4'-position of a tetraacyldisaccharide 1-phosphate intermediate (termed DS-1-P) to form tetraacyldisaccharide 1,4'-bis-phosphate (lipid IVA).</text>
</comment>
<comment type="catalytic activity">
    <reaction evidence="1">
        <text>a lipid A disaccharide + ATP = a lipid IVA + ADP + H(+)</text>
        <dbReference type="Rhea" id="RHEA:67840"/>
        <dbReference type="ChEBI" id="CHEBI:15378"/>
        <dbReference type="ChEBI" id="CHEBI:30616"/>
        <dbReference type="ChEBI" id="CHEBI:176343"/>
        <dbReference type="ChEBI" id="CHEBI:176425"/>
        <dbReference type="ChEBI" id="CHEBI:456216"/>
        <dbReference type="EC" id="2.7.1.130"/>
    </reaction>
</comment>
<comment type="pathway">
    <text evidence="1">Glycolipid biosynthesis; lipid IV(A) biosynthesis; lipid IV(A) from (3R)-3-hydroxytetradecanoyl-[acyl-carrier-protein] and UDP-N-acetyl-alpha-D-glucosamine: step 6/6.</text>
</comment>
<comment type="similarity">
    <text evidence="1">Belongs to the LpxK family.</text>
</comment>
<sequence>MQALVNKIWYQGHPLRWLLLPLSWLFAVITYVRRALFRLGIKSQTVMPVPVIVVGNITVGGSGKTPTVIYLIELLRQHGFTPGVVSRGYGVDIQGVKTVNLGASAAEVGDEPAMIVARTQVPMVVGAKRVDAANALIAEFGVDVIICDDGLQHYALGRDIELVVIDGQRGLGNGLLLPAGPLREGAWRLDAVDFIVNNGGPAAKGQFEMQLAPTEVKPVKCDLTSGEYSFDKSQPLVAMAGIGNPARFFESLRAQGYQLALCQGFDDHQPYDKTQLRDLAQDLPLLMTEKDAVKCRDFAQENWWYLAVNAKLSPQFDEQLLARLREVAAAKQGNFHGIR</sequence>
<proteinExistence type="inferred from homology"/>